<reference key="1">
    <citation type="journal article" date="2009" name="Appl. Environ. Microbiol.">
        <title>Three genomes from the phylum Acidobacteria provide insight into the lifestyles of these microorganisms in soils.</title>
        <authorList>
            <person name="Ward N.L."/>
            <person name="Challacombe J.F."/>
            <person name="Janssen P.H."/>
            <person name="Henrissat B."/>
            <person name="Coutinho P.M."/>
            <person name="Wu M."/>
            <person name="Xie G."/>
            <person name="Haft D.H."/>
            <person name="Sait M."/>
            <person name="Badger J."/>
            <person name="Barabote R.D."/>
            <person name="Bradley B."/>
            <person name="Brettin T.S."/>
            <person name="Brinkac L.M."/>
            <person name="Bruce D."/>
            <person name="Creasy T."/>
            <person name="Daugherty S.C."/>
            <person name="Davidsen T.M."/>
            <person name="DeBoy R.T."/>
            <person name="Detter J.C."/>
            <person name="Dodson R.J."/>
            <person name="Durkin A.S."/>
            <person name="Ganapathy A."/>
            <person name="Gwinn-Giglio M."/>
            <person name="Han C.S."/>
            <person name="Khouri H."/>
            <person name="Kiss H."/>
            <person name="Kothari S.P."/>
            <person name="Madupu R."/>
            <person name="Nelson K.E."/>
            <person name="Nelson W.C."/>
            <person name="Paulsen I."/>
            <person name="Penn K."/>
            <person name="Ren Q."/>
            <person name="Rosovitz M.J."/>
            <person name="Selengut J.D."/>
            <person name="Shrivastava S."/>
            <person name="Sullivan S.A."/>
            <person name="Tapia R."/>
            <person name="Thompson L.S."/>
            <person name="Watkins K.L."/>
            <person name="Yang Q."/>
            <person name="Yu C."/>
            <person name="Zafar N."/>
            <person name="Zhou L."/>
            <person name="Kuske C.R."/>
        </authorList>
    </citation>
    <scope>NUCLEOTIDE SEQUENCE [LARGE SCALE GENOMIC DNA]</scope>
    <source>
        <strain>Ellin6076</strain>
    </source>
</reference>
<protein>
    <recommendedName>
        <fullName evidence="1">CinA-like protein</fullName>
    </recommendedName>
</protein>
<proteinExistence type="inferred from homology"/>
<sequence>MDAEIIAIGSEMLTPERLDTNSLYLTAELNKLGVEVVSKCVIGDDRNRLAEQVRHSIARSAIVIITGGLGPTEDDVTREAVAMALDRKLTLNSEVLSWLEQRFAAAKRHMAEVNKRQAFVIEGAGILPNDRGTAPGQWLEESGAFAMLLPGPPHELKAMFERQCLPRLARVVPKQVIRTLFMRVAGMGESDLDQLIAPVYKKYENPATTILAAAGDIQIHLRARCRTESEGDALLAEVAGPIELLLGDRIYSRNGDSLEVVVGGLLRKLHATVCVAESATGGMLGERLTTVPGSSEYFTGGFITYNNQMKMELLGVSPEILQEHGAVSKETAEAMAIGARRRTSSTYALSITGAAGPDSADERVPVGTMYTAIADAAGTLVVHRQFLGDRQRIRTFVTQMALDLLRRRITGKTQTA</sequence>
<comment type="similarity">
    <text evidence="1">Belongs to the CinA family.</text>
</comment>
<gene>
    <name type="ordered locus">Acid_1567</name>
</gene>
<evidence type="ECO:0000255" key="1">
    <source>
        <dbReference type="HAMAP-Rule" id="MF_00226"/>
    </source>
</evidence>
<name>CINAL_SOLUE</name>
<organism>
    <name type="scientific">Solibacter usitatus (strain Ellin6076)</name>
    <dbReference type="NCBI Taxonomy" id="234267"/>
    <lineage>
        <taxon>Bacteria</taxon>
        <taxon>Pseudomonadati</taxon>
        <taxon>Acidobacteriota</taxon>
        <taxon>Terriglobia</taxon>
        <taxon>Bryobacterales</taxon>
        <taxon>Solibacteraceae</taxon>
        <taxon>Candidatus Solibacter</taxon>
    </lineage>
</organism>
<dbReference type="EMBL" id="CP000473">
    <property type="protein sequence ID" value="ABJ82558.1"/>
    <property type="molecule type" value="Genomic_DNA"/>
</dbReference>
<dbReference type="SMR" id="Q028J4"/>
<dbReference type="FunCoup" id="Q028J4">
    <property type="interactions" value="139"/>
</dbReference>
<dbReference type="STRING" id="234267.Acid_1567"/>
<dbReference type="KEGG" id="sus:Acid_1567"/>
<dbReference type="eggNOG" id="COG1058">
    <property type="taxonomic scope" value="Bacteria"/>
</dbReference>
<dbReference type="eggNOG" id="COG1546">
    <property type="taxonomic scope" value="Bacteria"/>
</dbReference>
<dbReference type="HOGENOM" id="CLU_030805_9_3_0"/>
<dbReference type="InParanoid" id="Q028J4"/>
<dbReference type="OrthoDB" id="9801454at2"/>
<dbReference type="CDD" id="cd00885">
    <property type="entry name" value="cinA"/>
    <property type="match status" value="1"/>
</dbReference>
<dbReference type="Gene3D" id="3.30.70.2860">
    <property type="match status" value="1"/>
</dbReference>
<dbReference type="Gene3D" id="3.90.950.20">
    <property type="entry name" value="CinA-like"/>
    <property type="match status" value="1"/>
</dbReference>
<dbReference type="Gene3D" id="3.40.980.10">
    <property type="entry name" value="MoaB/Mog-like domain"/>
    <property type="match status" value="1"/>
</dbReference>
<dbReference type="HAMAP" id="MF_00226_B">
    <property type="entry name" value="CinA_B"/>
    <property type="match status" value="1"/>
</dbReference>
<dbReference type="InterPro" id="IPR050101">
    <property type="entry name" value="CinA"/>
</dbReference>
<dbReference type="InterPro" id="IPR036653">
    <property type="entry name" value="CinA-like_C"/>
</dbReference>
<dbReference type="InterPro" id="IPR008136">
    <property type="entry name" value="CinA_C"/>
</dbReference>
<dbReference type="InterPro" id="IPR041424">
    <property type="entry name" value="CinA_KH"/>
</dbReference>
<dbReference type="InterPro" id="IPR008135">
    <property type="entry name" value="Competence-induced_CinA"/>
</dbReference>
<dbReference type="InterPro" id="IPR036425">
    <property type="entry name" value="MoaB/Mog-like_dom_sf"/>
</dbReference>
<dbReference type="InterPro" id="IPR001453">
    <property type="entry name" value="MoaB/Mog_dom"/>
</dbReference>
<dbReference type="NCBIfam" id="TIGR00200">
    <property type="entry name" value="cinA_nterm"/>
    <property type="match status" value="1"/>
</dbReference>
<dbReference type="NCBIfam" id="TIGR00199">
    <property type="entry name" value="PncC_domain"/>
    <property type="match status" value="1"/>
</dbReference>
<dbReference type="NCBIfam" id="NF001813">
    <property type="entry name" value="PRK00549.1"/>
    <property type="match status" value="1"/>
</dbReference>
<dbReference type="PANTHER" id="PTHR13939">
    <property type="entry name" value="NICOTINAMIDE-NUCLEOTIDE AMIDOHYDROLASE PNCC"/>
    <property type="match status" value="1"/>
</dbReference>
<dbReference type="PANTHER" id="PTHR13939:SF0">
    <property type="entry name" value="NMN AMIDOHYDROLASE-LIKE PROTEIN YFAY"/>
    <property type="match status" value="1"/>
</dbReference>
<dbReference type="Pfam" id="PF02464">
    <property type="entry name" value="CinA"/>
    <property type="match status" value="1"/>
</dbReference>
<dbReference type="Pfam" id="PF18146">
    <property type="entry name" value="CinA_KH"/>
    <property type="match status" value="1"/>
</dbReference>
<dbReference type="Pfam" id="PF00994">
    <property type="entry name" value="MoCF_biosynth"/>
    <property type="match status" value="1"/>
</dbReference>
<dbReference type="PIRSF" id="PIRSF006728">
    <property type="entry name" value="CinA"/>
    <property type="match status" value="1"/>
</dbReference>
<dbReference type="SMART" id="SM00852">
    <property type="entry name" value="MoCF_biosynth"/>
    <property type="match status" value="1"/>
</dbReference>
<dbReference type="SUPFAM" id="SSF142433">
    <property type="entry name" value="CinA-like"/>
    <property type="match status" value="1"/>
</dbReference>
<dbReference type="SUPFAM" id="SSF53218">
    <property type="entry name" value="Molybdenum cofactor biosynthesis proteins"/>
    <property type="match status" value="1"/>
</dbReference>
<feature type="chain" id="PRO_1000058728" description="CinA-like protein">
    <location>
        <begin position="1"/>
        <end position="416"/>
    </location>
</feature>
<accession>Q028J4</accession>